<gene>
    <name evidence="1" type="primary">rpoB</name>
    <name type="ordered locus">P9301_16761</name>
</gene>
<feature type="chain" id="PRO_0000300370" description="DNA-directed RNA polymerase subunit beta">
    <location>
        <begin position="1"/>
        <end position="1097"/>
    </location>
</feature>
<feature type="region of interest" description="Disordered" evidence="2">
    <location>
        <begin position="1072"/>
        <end position="1097"/>
    </location>
</feature>
<feature type="compositionally biased region" description="Polar residues" evidence="2">
    <location>
        <begin position="1077"/>
        <end position="1091"/>
    </location>
</feature>
<sequence>MSSSALQVAKTATYLPDLVEVQRASFKWFLEKGLIEELQNFSPISDYTGKLELHFIGEEYRLKRPRHDVEEAKRRDATFASQMYVTCRLINKETGEIKEQEVFIGELPLMTERGTFIINGAERVIVNQIVRSPGVYFKDELDKNGRRTYNASVIPNRGAWLKFETDKNNLLYVRVDKTRKINAHVLMRAMGLSDNDVVDKLRHPEFYQSSIESANDEGINSEDQALLELYKKLRPGEPPSVSGGQQLLHSRFFDPKRYDLGRVGRYKINKKLRLTVPDNVRTLTHEDVLSTIDYLINLELDIGGASLDDIDHLGNRRVRSVGELLQNQVRVGLNRLERIIKERMTVGETDSLTPAQLVNPKPLVAAIKEFFGSSQLSQFMDQTNPLAELTHKRRISALGPGGLTRERAGFAVRDIHPSHYGRLCPIETPEGPNAGLINSLATHARVNEYGFIETPFWEVKNGKVDKEGNPVYLSADLEDECRVAPGDVATDKDGNIIANLIPVRYRQDFEKVPPHQVDYVQLSPVQVISVATSLIPFLEHDDANRALMGSNMQRQAVPLLRPERPLVGTGLESQVARDSGMVPITKVNGTVSYVDANEIVVKDEDGNEHFHYLQKYQRSNQDTCLNQRPIVKIGDRVISGQVLADGSACEGGEIALGQNVLIAYMPWEGYNYEDAILVSERMVTDDLYTSVHIEKYEIEARQTKLGPEEITREIPNISEESLNNLDEMGIIRIGAFVESGDILVGKVTPKGESDQPPEEKLLRAIFGEKARDVRDNSLRVPKTEKGRVLDVRIYTREQGDELPPGANMVVRVYVAQRRKIQVGDKMAGRHGNKGIISRILPREDMPYLPDGTPVDIVLNPLGVPSRMNVGQVFELLMGWAAANLNCRVKVVPFDEMYGAEKSHQTVQAFLEEASKQPGKAWVYNPDDPGKLLLKDGRTGEPFDQPVAVGYSHFLKLVHLVDDKIHARSTGPYSLVTQQPLGGKAQQGGQRLGEMEVWALEAYGAAYTLQELLTVKSDDMQGRNEALNAIVKGKPIPRPGTPESFKVLMRELQSLGLDIGVYTDEGKEVDLMQDINPRRNTPSRPTYESLGTSEYEED</sequence>
<comment type="function">
    <text evidence="1">DNA-dependent RNA polymerase catalyzes the transcription of DNA into RNA using the four ribonucleoside triphosphates as substrates.</text>
</comment>
<comment type="catalytic activity">
    <reaction evidence="1">
        <text>RNA(n) + a ribonucleoside 5'-triphosphate = RNA(n+1) + diphosphate</text>
        <dbReference type="Rhea" id="RHEA:21248"/>
        <dbReference type="Rhea" id="RHEA-COMP:14527"/>
        <dbReference type="Rhea" id="RHEA-COMP:17342"/>
        <dbReference type="ChEBI" id="CHEBI:33019"/>
        <dbReference type="ChEBI" id="CHEBI:61557"/>
        <dbReference type="ChEBI" id="CHEBI:140395"/>
        <dbReference type="EC" id="2.7.7.6"/>
    </reaction>
</comment>
<comment type="subunit">
    <text evidence="1">In cyanobacteria the RNAP catalytic core is composed of 2 alpha, 1 beta, 1 beta', 1 gamma and 1 omega subunit. When a sigma factor is associated with the core the holoenzyme is formed, which can initiate transcription.</text>
</comment>
<comment type="similarity">
    <text evidence="1">Belongs to the RNA polymerase beta chain family.</text>
</comment>
<proteinExistence type="inferred from homology"/>
<name>RPOB_PROM0</name>
<keyword id="KW-0240">DNA-directed RNA polymerase</keyword>
<keyword id="KW-0548">Nucleotidyltransferase</keyword>
<keyword id="KW-1185">Reference proteome</keyword>
<keyword id="KW-0804">Transcription</keyword>
<keyword id="KW-0808">Transferase</keyword>
<evidence type="ECO:0000255" key="1">
    <source>
        <dbReference type="HAMAP-Rule" id="MF_01321"/>
    </source>
</evidence>
<evidence type="ECO:0000256" key="2">
    <source>
        <dbReference type="SAM" id="MobiDB-lite"/>
    </source>
</evidence>
<reference key="1">
    <citation type="journal article" date="2007" name="PLoS Genet.">
        <title>Patterns and implications of gene gain and loss in the evolution of Prochlorococcus.</title>
        <authorList>
            <person name="Kettler G.C."/>
            <person name="Martiny A.C."/>
            <person name="Huang K."/>
            <person name="Zucker J."/>
            <person name="Coleman M.L."/>
            <person name="Rodrigue S."/>
            <person name="Chen F."/>
            <person name="Lapidus A."/>
            <person name="Ferriera S."/>
            <person name="Johnson J."/>
            <person name="Steglich C."/>
            <person name="Church G.M."/>
            <person name="Richardson P."/>
            <person name="Chisholm S.W."/>
        </authorList>
    </citation>
    <scope>NUCLEOTIDE SEQUENCE [LARGE SCALE GENOMIC DNA]</scope>
    <source>
        <strain>MIT 9301</strain>
    </source>
</reference>
<organism>
    <name type="scientific">Prochlorococcus marinus (strain MIT 9301)</name>
    <dbReference type="NCBI Taxonomy" id="167546"/>
    <lineage>
        <taxon>Bacteria</taxon>
        <taxon>Bacillati</taxon>
        <taxon>Cyanobacteriota</taxon>
        <taxon>Cyanophyceae</taxon>
        <taxon>Synechococcales</taxon>
        <taxon>Prochlorococcaceae</taxon>
        <taxon>Prochlorococcus</taxon>
    </lineage>
</organism>
<protein>
    <recommendedName>
        <fullName evidence="1">DNA-directed RNA polymerase subunit beta</fullName>
        <shortName evidence="1">RNAP subunit beta</shortName>
        <ecNumber evidence="1">2.7.7.6</ecNumber>
    </recommendedName>
    <alternativeName>
        <fullName evidence="1">RNA polymerase subunit beta</fullName>
    </alternativeName>
    <alternativeName>
        <fullName evidence="1">Transcriptase subunit beta</fullName>
    </alternativeName>
</protein>
<accession>A3PEX4</accession>
<dbReference type="EC" id="2.7.7.6" evidence="1"/>
<dbReference type="EMBL" id="CP000576">
    <property type="protein sequence ID" value="ABO18299.1"/>
    <property type="molecule type" value="Genomic_DNA"/>
</dbReference>
<dbReference type="RefSeq" id="WP_011863596.1">
    <property type="nucleotide sequence ID" value="NC_009091.1"/>
</dbReference>
<dbReference type="SMR" id="A3PEX4"/>
<dbReference type="STRING" id="167546.P9301_16761"/>
<dbReference type="KEGG" id="pmg:P9301_16761"/>
<dbReference type="eggNOG" id="COG0085">
    <property type="taxonomic scope" value="Bacteria"/>
</dbReference>
<dbReference type="HOGENOM" id="CLU_000524_4_3_3"/>
<dbReference type="OrthoDB" id="9803954at2"/>
<dbReference type="Proteomes" id="UP000001430">
    <property type="component" value="Chromosome"/>
</dbReference>
<dbReference type="GO" id="GO:0000428">
    <property type="term" value="C:DNA-directed RNA polymerase complex"/>
    <property type="evidence" value="ECO:0007669"/>
    <property type="project" value="UniProtKB-KW"/>
</dbReference>
<dbReference type="GO" id="GO:0003677">
    <property type="term" value="F:DNA binding"/>
    <property type="evidence" value="ECO:0007669"/>
    <property type="project" value="UniProtKB-UniRule"/>
</dbReference>
<dbReference type="GO" id="GO:0003899">
    <property type="term" value="F:DNA-directed RNA polymerase activity"/>
    <property type="evidence" value="ECO:0007669"/>
    <property type="project" value="UniProtKB-UniRule"/>
</dbReference>
<dbReference type="GO" id="GO:0032549">
    <property type="term" value="F:ribonucleoside binding"/>
    <property type="evidence" value="ECO:0007669"/>
    <property type="project" value="InterPro"/>
</dbReference>
<dbReference type="GO" id="GO:0006351">
    <property type="term" value="P:DNA-templated transcription"/>
    <property type="evidence" value="ECO:0007669"/>
    <property type="project" value="UniProtKB-UniRule"/>
</dbReference>
<dbReference type="CDD" id="cd00653">
    <property type="entry name" value="RNA_pol_B_RPB2"/>
    <property type="match status" value="1"/>
</dbReference>
<dbReference type="FunFam" id="3.90.1800.10:FF:000001">
    <property type="entry name" value="DNA-directed RNA polymerase subunit beta"/>
    <property type="match status" value="1"/>
</dbReference>
<dbReference type="Gene3D" id="2.40.50.100">
    <property type="match status" value="1"/>
</dbReference>
<dbReference type="Gene3D" id="2.40.50.150">
    <property type="match status" value="1"/>
</dbReference>
<dbReference type="Gene3D" id="3.90.1100.10">
    <property type="match status" value="1"/>
</dbReference>
<dbReference type="Gene3D" id="2.30.150.10">
    <property type="entry name" value="DNA-directed RNA polymerase, beta subunit, external 1 domain"/>
    <property type="match status" value="1"/>
</dbReference>
<dbReference type="Gene3D" id="2.40.270.10">
    <property type="entry name" value="DNA-directed RNA polymerase, subunit 2, domain 6"/>
    <property type="match status" value="1"/>
</dbReference>
<dbReference type="Gene3D" id="3.90.1800.10">
    <property type="entry name" value="RNA polymerase alpha subunit dimerisation domain"/>
    <property type="match status" value="1"/>
</dbReference>
<dbReference type="Gene3D" id="3.90.1110.10">
    <property type="entry name" value="RNA polymerase Rpb2, domain 2"/>
    <property type="match status" value="1"/>
</dbReference>
<dbReference type="HAMAP" id="MF_01321">
    <property type="entry name" value="RNApol_bact_RpoB"/>
    <property type="match status" value="1"/>
</dbReference>
<dbReference type="InterPro" id="IPR042107">
    <property type="entry name" value="DNA-dir_RNA_pol_bsu_ext_1_sf"/>
</dbReference>
<dbReference type="InterPro" id="IPR019462">
    <property type="entry name" value="DNA-dir_RNA_pol_bsu_external_1"/>
</dbReference>
<dbReference type="InterPro" id="IPR015712">
    <property type="entry name" value="DNA-dir_RNA_pol_su2"/>
</dbReference>
<dbReference type="InterPro" id="IPR007120">
    <property type="entry name" value="DNA-dir_RNAP_su2_dom"/>
</dbReference>
<dbReference type="InterPro" id="IPR037033">
    <property type="entry name" value="DNA-dir_RNAP_su2_hyb_sf"/>
</dbReference>
<dbReference type="InterPro" id="IPR010243">
    <property type="entry name" value="RNA_pol_bsu_bac"/>
</dbReference>
<dbReference type="InterPro" id="IPR007121">
    <property type="entry name" value="RNA_pol_bsu_CS"/>
</dbReference>
<dbReference type="InterPro" id="IPR007644">
    <property type="entry name" value="RNA_pol_bsu_protrusion"/>
</dbReference>
<dbReference type="InterPro" id="IPR007642">
    <property type="entry name" value="RNA_pol_Rpb2_2"/>
</dbReference>
<dbReference type="InterPro" id="IPR037034">
    <property type="entry name" value="RNA_pol_Rpb2_2_sf"/>
</dbReference>
<dbReference type="InterPro" id="IPR007645">
    <property type="entry name" value="RNA_pol_Rpb2_3"/>
</dbReference>
<dbReference type="InterPro" id="IPR007641">
    <property type="entry name" value="RNA_pol_Rpb2_7"/>
</dbReference>
<dbReference type="InterPro" id="IPR014724">
    <property type="entry name" value="RNA_pol_RPB2_OB-fold"/>
</dbReference>
<dbReference type="NCBIfam" id="NF001616">
    <property type="entry name" value="PRK00405.1"/>
    <property type="match status" value="1"/>
</dbReference>
<dbReference type="NCBIfam" id="TIGR02013">
    <property type="entry name" value="rpoB"/>
    <property type="match status" value="1"/>
</dbReference>
<dbReference type="PANTHER" id="PTHR20856">
    <property type="entry name" value="DNA-DIRECTED RNA POLYMERASE I SUBUNIT 2"/>
    <property type="match status" value="1"/>
</dbReference>
<dbReference type="Pfam" id="PF04563">
    <property type="entry name" value="RNA_pol_Rpb2_1"/>
    <property type="match status" value="1"/>
</dbReference>
<dbReference type="Pfam" id="PF04561">
    <property type="entry name" value="RNA_pol_Rpb2_2"/>
    <property type="match status" value="1"/>
</dbReference>
<dbReference type="Pfam" id="PF04565">
    <property type="entry name" value="RNA_pol_Rpb2_3"/>
    <property type="match status" value="1"/>
</dbReference>
<dbReference type="Pfam" id="PF10385">
    <property type="entry name" value="RNA_pol_Rpb2_45"/>
    <property type="match status" value="1"/>
</dbReference>
<dbReference type="Pfam" id="PF00562">
    <property type="entry name" value="RNA_pol_Rpb2_6"/>
    <property type="match status" value="1"/>
</dbReference>
<dbReference type="Pfam" id="PF04560">
    <property type="entry name" value="RNA_pol_Rpb2_7"/>
    <property type="match status" value="1"/>
</dbReference>
<dbReference type="SUPFAM" id="SSF64484">
    <property type="entry name" value="beta and beta-prime subunits of DNA dependent RNA-polymerase"/>
    <property type="match status" value="1"/>
</dbReference>
<dbReference type="PROSITE" id="PS01166">
    <property type="entry name" value="RNA_POL_BETA"/>
    <property type="match status" value="1"/>
</dbReference>